<reference key="1">
    <citation type="submission" date="2007-05" db="EMBL/GenBank/DDBJ databases">
        <title>Complete sequence of Geobacter uraniireducens Rf4.</title>
        <authorList>
            <consortium name="US DOE Joint Genome Institute"/>
            <person name="Copeland A."/>
            <person name="Lucas S."/>
            <person name="Lapidus A."/>
            <person name="Barry K."/>
            <person name="Detter J.C."/>
            <person name="Glavina del Rio T."/>
            <person name="Hammon N."/>
            <person name="Israni S."/>
            <person name="Dalin E."/>
            <person name="Tice H."/>
            <person name="Pitluck S."/>
            <person name="Chertkov O."/>
            <person name="Brettin T."/>
            <person name="Bruce D."/>
            <person name="Han C."/>
            <person name="Schmutz J."/>
            <person name="Larimer F."/>
            <person name="Land M."/>
            <person name="Hauser L."/>
            <person name="Kyrpides N."/>
            <person name="Mikhailova N."/>
            <person name="Shelobolina E."/>
            <person name="Aklujkar M."/>
            <person name="Lovley D."/>
            <person name="Richardson P."/>
        </authorList>
    </citation>
    <scope>NUCLEOTIDE SEQUENCE [LARGE SCALE GENOMIC DNA]</scope>
    <source>
        <strain>ATCC BAA-1134 / JCM 13001 / Rf4</strain>
    </source>
</reference>
<feature type="chain" id="PRO_1000077276" description="Probable cytosol aminopeptidase">
    <location>
        <begin position="1"/>
        <end position="495"/>
    </location>
</feature>
<feature type="active site" evidence="1">
    <location>
        <position position="276"/>
    </location>
</feature>
<feature type="active site" evidence="1">
    <location>
        <position position="350"/>
    </location>
</feature>
<feature type="binding site" evidence="1">
    <location>
        <position position="264"/>
    </location>
    <ligand>
        <name>Mn(2+)</name>
        <dbReference type="ChEBI" id="CHEBI:29035"/>
        <label>2</label>
    </ligand>
</feature>
<feature type="binding site" evidence="1">
    <location>
        <position position="269"/>
    </location>
    <ligand>
        <name>Mn(2+)</name>
        <dbReference type="ChEBI" id="CHEBI:29035"/>
        <label>1</label>
    </ligand>
</feature>
<feature type="binding site" evidence="1">
    <location>
        <position position="269"/>
    </location>
    <ligand>
        <name>Mn(2+)</name>
        <dbReference type="ChEBI" id="CHEBI:29035"/>
        <label>2</label>
    </ligand>
</feature>
<feature type="binding site" evidence="1">
    <location>
        <position position="287"/>
    </location>
    <ligand>
        <name>Mn(2+)</name>
        <dbReference type="ChEBI" id="CHEBI:29035"/>
        <label>2</label>
    </ligand>
</feature>
<feature type="binding site" evidence="1">
    <location>
        <position position="346"/>
    </location>
    <ligand>
        <name>Mn(2+)</name>
        <dbReference type="ChEBI" id="CHEBI:29035"/>
        <label>1</label>
    </ligand>
</feature>
<feature type="binding site" evidence="1">
    <location>
        <position position="348"/>
    </location>
    <ligand>
        <name>Mn(2+)</name>
        <dbReference type="ChEBI" id="CHEBI:29035"/>
        <label>1</label>
    </ligand>
</feature>
<feature type="binding site" evidence="1">
    <location>
        <position position="348"/>
    </location>
    <ligand>
        <name>Mn(2+)</name>
        <dbReference type="ChEBI" id="CHEBI:29035"/>
        <label>2</label>
    </ligand>
</feature>
<protein>
    <recommendedName>
        <fullName evidence="1">Probable cytosol aminopeptidase</fullName>
        <ecNumber evidence="1">3.4.11.1</ecNumber>
    </recommendedName>
    <alternativeName>
        <fullName evidence="1">Leucine aminopeptidase</fullName>
        <shortName evidence="1">LAP</shortName>
        <ecNumber evidence="1">3.4.11.10</ecNumber>
    </alternativeName>
    <alternativeName>
        <fullName evidence="1">Leucyl aminopeptidase</fullName>
    </alternativeName>
</protein>
<gene>
    <name evidence="1" type="primary">pepA</name>
    <name type="ordered locus">Gura_4252</name>
</gene>
<sequence>MEFAQLVDDPLKHVCRVLVVGCYVDGFRGRFFDDLDEALGGGLSSIYEQREFTGELNKVKLLNTFGKLPAERLLLVGLGNNEELNSDRLRQAAGAAATALRPVGVRKLSSILHLARDRGAETLTATVEGFALGSYSFDEYKTGKEPKTDLEEATLLFAEAGDLDYNVNKVLAETATICDAVRFARDLVSQPGNVLVPSYLAEKGREIAARYGLSCTVLEREEMAQNSMNALLAVAKGSHEPPKFIILEYRGGGEDDAVTVLVGKGVTFDSGGISLKPREGMEKMKDDMAGAAAVMGTMMAVAALKLSQNVVGLIPAAENLPGGGAYKPGDIVRSMSGQTIEIVNTDAEGRLLLCDALYFAQRYKPAALIDIATLTGACVIALGNFATGLMGNDEGLTRSLKRAGEVSGERVWELPLWDEYGELMESDIADMKNAGGPSGASISAGWFLHKFVGKTAWAHLDIAGTSWEEKGRPYRPKGATGVGVRLLVEYLRGLK</sequence>
<dbReference type="EC" id="3.4.11.1" evidence="1"/>
<dbReference type="EC" id="3.4.11.10" evidence="1"/>
<dbReference type="EMBL" id="CP000698">
    <property type="protein sequence ID" value="ABQ28395.1"/>
    <property type="molecule type" value="Genomic_DNA"/>
</dbReference>
<dbReference type="RefSeq" id="WP_011941025.1">
    <property type="nucleotide sequence ID" value="NC_009483.1"/>
</dbReference>
<dbReference type="SMR" id="A5G9C7"/>
<dbReference type="STRING" id="351605.Gura_4252"/>
<dbReference type="KEGG" id="gur:Gura_4252"/>
<dbReference type="HOGENOM" id="CLU_013734_2_2_7"/>
<dbReference type="OrthoDB" id="9809354at2"/>
<dbReference type="Proteomes" id="UP000006695">
    <property type="component" value="Chromosome"/>
</dbReference>
<dbReference type="GO" id="GO:0005737">
    <property type="term" value="C:cytoplasm"/>
    <property type="evidence" value="ECO:0007669"/>
    <property type="project" value="UniProtKB-SubCell"/>
</dbReference>
<dbReference type="GO" id="GO:0030145">
    <property type="term" value="F:manganese ion binding"/>
    <property type="evidence" value="ECO:0007669"/>
    <property type="project" value="UniProtKB-UniRule"/>
</dbReference>
<dbReference type="GO" id="GO:0070006">
    <property type="term" value="F:metalloaminopeptidase activity"/>
    <property type="evidence" value="ECO:0007669"/>
    <property type="project" value="InterPro"/>
</dbReference>
<dbReference type="GO" id="GO:0006508">
    <property type="term" value="P:proteolysis"/>
    <property type="evidence" value="ECO:0007669"/>
    <property type="project" value="UniProtKB-KW"/>
</dbReference>
<dbReference type="CDD" id="cd00433">
    <property type="entry name" value="Peptidase_M17"/>
    <property type="match status" value="1"/>
</dbReference>
<dbReference type="Gene3D" id="3.40.220.10">
    <property type="entry name" value="Leucine Aminopeptidase, subunit E, domain 1"/>
    <property type="match status" value="1"/>
</dbReference>
<dbReference type="Gene3D" id="3.40.630.10">
    <property type="entry name" value="Zn peptidases"/>
    <property type="match status" value="1"/>
</dbReference>
<dbReference type="HAMAP" id="MF_00181">
    <property type="entry name" value="Cytosol_peptidase_M17"/>
    <property type="match status" value="1"/>
</dbReference>
<dbReference type="InterPro" id="IPR011356">
    <property type="entry name" value="Leucine_aapep/pepB"/>
</dbReference>
<dbReference type="InterPro" id="IPR043472">
    <property type="entry name" value="Macro_dom-like"/>
</dbReference>
<dbReference type="InterPro" id="IPR000819">
    <property type="entry name" value="Peptidase_M17_C"/>
</dbReference>
<dbReference type="InterPro" id="IPR023042">
    <property type="entry name" value="Peptidase_M17_leu_NH2_pept"/>
</dbReference>
<dbReference type="InterPro" id="IPR008283">
    <property type="entry name" value="Peptidase_M17_N"/>
</dbReference>
<dbReference type="NCBIfam" id="NF002073">
    <property type="entry name" value="PRK00913.1-2"/>
    <property type="match status" value="1"/>
</dbReference>
<dbReference type="NCBIfam" id="NF002074">
    <property type="entry name" value="PRK00913.1-4"/>
    <property type="match status" value="1"/>
</dbReference>
<dbReference type="NCBIfam" id="NF002077">
    <property type="entry name" value="PRK00913.2-4"/>
    <property type="match status" value="1"/>
</dbReference>
<dbReference type="NCBIfam" id="NF002083">
    <property type="entry name" value="PRK00913.3-5"/>
    <property type="match status" value="1"/>
</dbReference>
<dbReference type="PANTHER" id="PTHR11963:SF23">
    <property type="entry name" value="CYTOSOL AMINOPEPTIDASE"/>
    <property type="match status" value="1"/>
</dbReference>
<dbReference type="PANTHER" id="PTHR11963">
    <property type="entry name" value="LEUCINE AMINOPEPTIDASE-RELATED"/>
    <property type="match status" value="1"/>
</dbReference>
<dbReference type="Pfam" id="PF00883">
    <property type="entry name" value="Peptidase_M17"/>
    <property type="match status" value="1"/>
</dbReference>
<dbReference type="Pfam" id="PF02789">
    <property type="entry name" value="Peptidase_M17_N"/>
    <property type="match status" value="1"/>
</dbReference>
<dbReference type="PRINTS" id="PR00481">
    <property type="entry name" value="LAMNOPPTDASE"/>
</dbReference>
<dbReference type="SUPFAM" id="SSF52949">
    <property type="entry name" value="Macro domain-like"/>
    <property type="match status" value="1"/>
</dbReference>
<dbReference type="SUPFAM" id="SSF53187">
    <property type="entry name" value="Zn-dependent exopeptidases"/>
    <property type="match status" value="1"/>
</dbReference>
<dbReference type="PROSITE" id="PS00631">
    <property type="entry name" value="CYTOSOL_AP"/>
    <property type="match status" value="1"/>
</dbReference>
<keyword id="KW-0031">Aminopeptidase</keyword>
<keyword id="KW-0963">Cytoplasm</keyword>
<keyword id="KW-0378">Hydrolase</keyword>
<keyword id="KW-0464">Manganese</keyword>
<keyword id="KW-0479">Metal-binding</keyword>
<keyword id="KW-0645">Protease</keyword>
<keyword id="KW-1185">Reference proteome</keyword>
<evidence type="ECO:0000255" key="1">
    <source>
        <dbReference type="HAMAP-Rule" id="MF_00181"/>
    </source>
</evidence>
<proteinExistence type="inferred from homology"/>
<name>AMPA_GEOUR</name>
<accession>A5G9C7</accession>
<organism>
    <name type="scientific">Geotalea uraniireducens (strain Rf4)</name>
    <name type="common">Geobacter uraniireducens</name>
    <dbReference type="NCBI Taxonomy" id="351605"/>
    <lineage>
        <taxon>Bacteria</taxon>
        <taxon>Pseudomonadati</taxon>
        <taxon>Thermodesulfobacteriota</taxon>
        <taxon>Desulfuromonadia</taxon>
        <taxon>Geobacterales</taxon>
        <taxon>Geobacteraceae</taxon>
        <taxon>Geotalea</taxon>
    </lineage>
</organism>
<comment type="function">
    <text evidence="1">Presumably involved in the processing and regular turnover of intracellular proteins. Catalyzes the removal of unsubstituted N-terminal amino acids from various peptides.</text>
</comment>
<comment type="catalytic activity">
    <reaction evidence="1">
        <text>Release of an N-terminal amino acid, Xaa-|-Yaa-, in which Xaa is preferably Leu, but may be other amino acids including Pro although not Arg or Lys, and Yaa may be Pro. Amino acid amides and methyl esters are also readily hydrolyzed, but rates on arylamides are exceedingly low.</text>
        <dbReference type="EC" id="3.4.11.1"/>
    </reaction>
</comment>
<comment type="catalytic activity">
    <reaction evidence="1">
        <text>Release of an N-terminal amino acid, preferentially leucine, but not glutamic or aspartic acids.</text>
        <dbReference type="EC" id="3.4.11.10"/>
    </reaction>
</comment>
<comment type="cofactor">
    <cofactor evidence="1">
        <name>Mn(2+)</name>
        <dbReference type="ChEBI" id="CHEBI:29035"/>
    </cofactor>
    <text evidence="1">Binds 2 manganese ions per subunit.</text>
</comment>
<comment type="subcellular location">
    <subcellularLocation>
        <location evidence="1">Cytoplasm</location>
    </subcellularLocation>
</comment>
<comment type="similarity">
    <text evidence="1">Belongs to the peptidase M17 family.</text>
</comment>